<dbReference type="EC" id="3.6.5.n1" evidence="1"/>
<dbReference type="EMBL" id="CP000269">
    <property type="protein sequence ID" value="ABR89533.1"/>
    <property type="molecule type" value="Genomic_DNA"/>
</dbReference>
<dbReference type="RefSeq" id="WP_012079223.1">
    <property type="nucleotide sequence ID" value="NC_009659.1"/>
</dbReference>
<dbReference type="SMR" id="A6SXR0"/>
<dbReference type="STRING" id="375286.mma_1367"/>
<dbReference type="KEGG" id="mms:mma_1367"/>
<dbReference type="eggNOG" id="COG0481">
    <property type="taxonomic scope" value="Bacteria"/>
</dbReference>
<dbReference type="HOGENOM" id="CLU_009995_3_3_4"/>
<dbReference type="OrthoDB" id="9801472at2"/>
<dbReference type="Proteomes" id="UP000006388">
    <property type="component" value="Chromosome"/>
</dbReference>
<dbReference type="GO" id="GO:0005886">
    <property type="term" value="C:plasma membrane"/>
    <property type="evidence" value="ECO:0007669"/>
    <property type="project" value="UniProtKB-SubCell"/>
</dbReference>
<dbReference type="GO" id="GO:0005525">
    <property type="term" value="F:GTP binding"/>
    <property type="evidence" value="ECO:0007669"/>
    <property type="project" value="UniProtKB-UniRule"/>
</dbReference>
<dbReference type="GO" id="GO:0003924">
    <property type="term" value="F:GTPase activity"/>
    <property type="evidence" value="ECO:0007669"/>
    <property type="project" value="UniProtKB-UniRule"/>
</dbReference>
<dbReference type="GO" id="GO:0097216">
    <property type="term" value="F:guanosine tetraphosphate binding"/>
    <property type="evidence" value="ECO:0007669"/>
    <property type="project" value="UniProtKB-ARBA"/>
</dbReference>
<dbReference type="GO" id="GO:0043022">
    <property type="term" value="F:ribosome binding"/>
    <property type="evidence" value="ECO:0007669"/>
    <property type="project" value="UniProtKB-UniRule"/>
</dbReference>
<dbReference type="GO" id="GO:0003746">
    <property type="term" value="F:translation elongation factor activity"/>
    <property type="evidence" value="ECO:0007669"/>
    <property type="project" value="UniProtKB-UniRule"/>
</dbReference>
<dbReference type="GO" id="GO:0045727">
    <property type="term" value="P:positive regulation of translation"/>
    <property type="evidence" value="ECO:0007669"/>
    <property type="project" value="UniProtKB-UniRule"/>
</dbReference>
<dbReference type="CDD" id="cd03699">
    <property type="entry name" value="EF4_II"/>
    <property type="match status" value="1"/>
</dbReference>
<dbReference type="CDD" id="cd16260">
    <property type="entry name" value="EF4_III"/>
    <property type="match status" value="1"/>
</dbReference>
<dbReference type="CDD" id="cd01890">
    <property type="entry name" value="LepA"/>
    <property type="match status" value="1"/>
</dbReference>
<dbReference type="CDD" id="cd03709">
    <property type="entry name" value="lepA_C"/>
    <property type="match status" value="1"/>
</dbReference>
<dbReference type="FunFam" id="3.40.50.300:FF:000078">
    <property type="entry name" value="Elongation factor 4"/>
    <property type="match status" value="1"/>
</dbReference>
<dbReference type="FunFam" id="2.40.30.10:FF:000015">
    <property type="entry name" value="Translation factor GUF1, mitochondrial"/>
    <property type="match status" value="1"/>
</dbReference>
<dbReference type="FunFam" id="3.30.70.240:FF:000007">
    <property type="entry name" value="Translation factor GUF1, mitochondrial"/>
    <property type="match status" value="1"/>
</dbReference>
<dbReference type="FunFam" id="3.30.70.2570:FF:000001">
    <property type="entry name" value="Translation factor GUF1, mitochondrial"/>
    <property type="match status" value="1"/>
</dbReference>
<dbReference type="FunFam" id="3.30.70.870:FF:000004">
    <property type="entry name" value="Translation factor GUF1, mitochondrial"/>
    <property type="match status" value="1"/>
</dbReference>
<dbReference type="Gene3D" id="3.30.70.240">
    <property type="match status" value="1"/>
</dbReference>
<dbReference type="Gene3D" id="3.30.70.2570">
    <property type="entry name" value="Elongation factor 4, C-terminal domain"/>
    <property type="match status" value="1"/>
</dbReference>
<dbReference type="Gene3D" id="3.30.70.870">
    <property type="entry name" value="Elongation Factor G (Translational Gtpase), domain 3"/>
    <property type="match status" value="1"/>
</dbReference>
<dbReference type="Gene3D" id="3.40.50.300">
    <property type="entry name" value="P-loop containing nucleotide triphosphate hydrolases"/>
    <property type="match status" value="1"/>
</dbReference>
<dbReference type="Gene3D" id="2.40.30.10">
    <property type="entry name" value="Translation factors"/>
    <property type="match status" value="1"/>
</dbReference>
<dbReference type="HAMAP" id="MF_00071">
    <property type="entry name" value="LepA"/>
    <property type="match status" value="1"/>
</dbReference>
<dbReference type="InterPro" id="IPR006297">
    <property type="entry name" value="EF-4"/>
</dbReference>
<dbReference type="InterPro" id="IPR035647">
    <property type="entry name" value="EFG_III/V"/>
</dbReference>
<dbReference type="InterPro" id="IPR000640">
    <property type="entry name" value="EFG_V-like"/>
</dbReference>
<dbReference type="InterPro" id="IPR004161">
    <property type="entry name" value="EFTu-like_2"/>
</dbReference>
<dbReference type="InterPro" id="IPR031157">
    <property type="entry name" value="G_TR_CS"/>
</dbReference>
<dbReference type="InterPro" id="IPR038363">
    <property type="entry name" value="LepA_C_sf"/>
</dbReference>
<dbReference type="InterPro" id="IPR013842">
    <property type="entry name" value="LepA_CTD"/>
</dbReference>
<dbReference type="InterPro" id="IPR035654">
    <property type="entry name" value="LepA_IV"/>
</dbReference>
<dbReference type="InterPro" id="IPR027417">
    <property type="entry name" value="P-loop_NTPase"/>
</dbReference>
<dbReference type="InterPro" id="IPR005225">
    <property type="entry name" value="Small_GTP-bd"/>
</dbReference>
<dbReference type="InterPro" id="IPR000795">
    <property type="entry name" value="T_Tr_GTP-bd_dom"/>
</dbReference>
<dbReference type="InterPro" id="IPR009000">
    <property type="entry name" value="Transl_B-barrel_sf"/>
</dbReference>
<dbReference type="NCBIfam" id="TIGR01393">
    <property type="entry name" value="lepA"/>
    <property type="match status" value="1"/>
</dbReference>
<dbReference type="NCBIfam" id="TIGR00231">
    <property type="entry name" value="small_GTP"/>
    <property type="match status" value="1"/>
</dbReference>
<dbReference type="PANTHER" id="PTHR43512:SF4">
    <property type="entry name" value="TRANSLATION FACTOR GUF1 HOMOLOG, CHLOROPLASTIC"/>
    <property type="match status" value="1"/>
</dbReference>
<dbReference type="PANTHER" id="PTHR43512">
    <property type="entry name" value="TRANSLATION FACTOR GUF1-RELATED"/>
    <property type="match status" value="1"/>
</dbReference>
<dbReference type="Pfam" id="PF00679">
    <property type="entry name" value="EFG_C"/>
    <property type="match status" value="1"/>
</dbReference>
<dbReference type="Pfam" id="PF00009">
    <property type="entry name" value="GTP_EFTU"/>
    <property type="match status" value="1"/>
</dbReference>
<dbReference type="Pfam" id="PF03144">
    <property type="entry name" value="GTP_EFTU_D2"/>
    <property type="match status" value="1"/>
</dbReference>
<dbReference type="Pfam" id="PF06421">
    <property type="entry name" value="LepA_C"/>
    <property type="match status" value="1"/>
</dbReference>
<dbReference type="PRINTS" id="PR00315">
    <property type="entry name" value="ELONGATNFCT"/>
</dbReference>
<dbReference type="SMART" id="SM00838">
    <property type="entry name" value="EFG_C"/>
    <property type="match status" value="1"/>
</dbReference>
<dbReference type="SUPFAM" id="SSF54980">
    <property type="entry name" value="EF-G C-terminal domain-like"/>
    <property type="match status" value="2"/>
</dbReference>
<dbReference type="SUPFAM" id="SSF52540">
    <property type="entry name" value="P-loop containing nucleoside triphosphate hydrolases"/>
    <property type="match status" value="1"/>
</dbReference>
<dbReference type="SUPFAM" id="SSF50447">
    <property type="entry name" value="Translation proteins"/>
    <property type="match status" value="1"/>
</dbReference>
<dbReference type="PROSITE" id="PS00301">
    <property type="entry name" value="G_TR_1"/>
    <property type="match status" value="1"/>
</dbReference>
<dbReference type="PROSITE" id="PS51722">
    <property type="entry name" value="G_TR_2"/>
    <property type="match status" value="1"/>
</dbReference>
<name>LEPA_JANMA</name>
<evidence type="ECO:0000255" key="1">
    <source>
        <dbReference type="HAMAP-Rule" id="MF_00071"/>
    </source>
</evidence>
<keyword id="KW-0997">Cell inner membrane</keyword>
<keyword id="KW-1003">Cell membrane</keyword>
<keyword id="KW-0342">GTP-binding</keyword>
<keyword id="KW-0378">Hydrolase</keyword>
<keyword id="KW-0472">Membrane</keyword>
<keyword id="KW-0547">Nucleotide-binding</keyword>
<keyword id="KW-0648">Protein biosynthesis</keyword>
<protein>
    <recommendedName>
        <fullName evidence="1">Elongation factor 4</fullName>
        <shortName evidence="1">EF-4</shortName>
        <ecNumber evidence="1">3.6.5.n1</ecNumber>
    </recommendedName>
    <alternativeName>
        <fullName evidence="1">Ribosomal back-translocase LepA</fullName>
    </alternativeName>
</protein>
<comment type="function">
    <text evidence="1">Required for accurate and efficient protein synthesis under certain stress conditions. May act as a fidelity factor of the translation reaction, by catalyzing a one-codon backward translocation of tRNAs on improperly translocated ribosomes. Back-translocation proceeds from a post-translocation (POST) complex to a pre-translocation (PRE) complex, thus giving elongation factor G a second chance to translocate the tRNAs correctly. Binds to ribosomes in a GTP-dependent manner.</text>
</comment>
<comment type="catalytic activity">
    <reaction evidence="1">
        <text>GTP + H2O = GDP + phosphate + H(+)</text>
        <dbReference type="Rhea" id="RHEA:19669"/>
        <dbReference type="ChEBI" id="CHEBI:15377"/>
        <dbReference type="ChEBI" id="CHEBI:15378"/>
        <dbReference type="ChEBI" id="CHEBI:37565"/>
        <dbReference type="ChEBI" id="CHEBI:43474"/>
        <dbReference type="ChEBI" id="CHEBI:58189"/>
        <dbReference type="EC" id="3.6.5.n1"/>
    </reaction>
</comment>
<comment type="subcellular location">
    <subcellularLocation>
        <location evidence="1">Cell inner membrane</location>
        <topology evidence="1">Peripheral membrane protein</topology>
        <orientation evidence="1">Cytoplasmic side</orientation>
    </subcellularLocation>
</comment>
<comment type="similarity">
    <text evidence="1">Belongs to the TRAFAC class translation factor GTPase superfamily. Classic translation factor GTPase family. LepA subfamily.</text>
</comment>
<proteinExistence type="inferred from homology"/>
<organism>
    <name type="scientific">Janthinobacterium sp. (strain Marseille)</name>
    <name type="common">Minibacterium massiliensis</name>
    <dbReference type="NCBI Taxonomy" id="375286"/>
    <lineage>
        <taxon>Bacteria</taxon>
        <taxon>Pseudomonadati</taxon>
        <taxon>Pseudomonadota</taxon>
        <taxon>Betaproteobacteria</taxon>
        <taxon>Burkholderiales</taxon>
        <taxon>Oxalobacteraceae</taxon>
        <taxon>Janthinobacterium</taxon>
    </lineage>
</organism>
<reference key="1">
    <citation type="journal article" date="2007" name="PLoS Genet.">
        <title>Genome analysis of Minibacterium massiliensis highlights the convergent evolution of water-living bacteria.</title>
        <authorList>
            <person name="Audic S."/>
            <person name="Robert C."/>
            <person name="Campagna B."/>
            <person name="Parinello H."/>
            <person name="Claverie J.-M."/>
            <person name="Raoult D."/>
            <person name="Drancourt M."/>
        </authorList>
    </citation>
    <scope>NUCLEOTIDE SEQUENCE [LARGE SCALE GENOMIC DNA]</scope>
    <source>
        <strain>Marseille</strain>
    </source>
</reference>
<gene>
    <name evidence="1" type="primary">lepA</name>
    <name type="ordered locus">mma_1367</name>
</gene>
<accession>A6SXR0</accession>
<sequence length="597" mass="65785">MNNIRNFSIIAHIDHGKSTLADRIIQLCGGLSDREMEAQVLDSMDIERERGITIKAQTAALMYKARDGQVYNLNLIDTPGHVDFSYEVSRSLSACEGALLVVDASQGVEAQTVANCYTALDLGVEVVPVLNKIDLPSADPANAIAEIEEVIGIDASEAVHCSAKTGLGVQDVLESLITKVPPPKGDATAPLQALIVDSWFDNYVGVVMLVRVMNGTLRPKDKILLMASESQHLVESVGVFTPKSISRDTLTAGQVGFIIAGIKELKAAKVGDTVTLASRPAAEPLPGFKEVQPQVFAGLFPVEANQYDALRDSLEKLKLNDAALMYEPEVSQALGFGFRCGFLGLLHMEIVQERLEREFDMDLITTAPTVIYEVVLRDGSILMVDNPSKMPDPSKIEEIREPIVTVNLYMPQEYVGSVITLCTQKRGIQMDMSYHGKQVKLIYEMPMAEIVLDFFDKLKSTSRGYASMDYEFKEYRSSDVVKVDMLINSEKVDALAIIVHRANSQYRGRAVAAKMRELIPRQMFDVAIQAAIGANIISRENVKALRKNVLAKCYGGDISRKRKLLEKQKAGKKRMKQVGSVEIPQEAFLAILQVDDK</sequence>
<feature type="chain" id="PRO_1000032006" description="Elongation factor 4">
    <location>
        <begin position="1"/>
        <end position="597"/>
    </location>
</feature>
<feature type="domain" description="tr-type G">
    <location>
        <begin position="2"/>
        <end position="184"/>
    </location>
</feature>
<feature type="binding site" evidence="1">
    <location>
        <begin position="14"/>
        <end position="19"/>
    </location>
    <ligand>
        <name>GTP</name>
        <dbReference type="ChEBI" id="CHEBI:37565"/>
    </ligand>
</feature>
<feature type="binding site" evidence="1">
    <location>
        <begin position="131"/>
        <end position="134"/>
    </location>
    <ligand>
        <name>GTP</name>
        <dbReference type="ChEBI" id="CHEBI:37565"/>
    </ligand>
</feature>